<proteinExistence type="evidence at protein level"/>
<comment type="function">
    <text evidence="2">Acts as a transcriptional activator: mediates transcriptional activation by binding to E box-containing promoter consensus core sequences 5'-CANNTG-3'. Associates with the p300/CBP transcription coactivator complex to stimulate transcription of the secretin gene as well as the gene encoding the cyclin-dependent kinase inhibitor CDKN1A. Contributes to the regulation of several cell differentiation pathways, like those that promote the formation of early retinal ganglion cells, inner ear sensory neurons, granule cells forming either the cerebellum or the dentate gyrus cell layer of the hippocampus, endocrine islet cells of the pancreas and enteroendocrine cells of the small intestine. Together with PAX6 or SIX3, is required for the regulation of amacrine cell fate specification. Also required for dendrite morphogenesis and maintenance in the cerebellar cortex. Associates with chromatin to enhancer regulatory elements in genes encoding key transcriptional regulators of neurogenesis (By similarity).</text>
</comment>
<comment type="subunit">
    <text evidence="2 7">Efficient DNA-binding requires dimerization with another bHLH protein. Heterodimer with TCF3/E47; the heterodimer is inhibited in presence of ID2, but not NR0B2, to E-box element. Interacts with EP300; the interaction is inhibited by NR0B2 (By similarity). Interacts with RREB1 (PubMed:12482979). Interacts with ATOH8 (By similarity).</text>
</comment>
<comment type="subcellular location">
    <subcellularLocation>
        <location evidence="1">Cytoplasm</location>
    </subcellularLocation>
    <subcellularLocation>
        <location evidence="5">Nucleus</location>
    </subcellularLocation>
    <text evidence="1">In pancreatic islet cells, shuttles to the nucleus in response to glucose stimulation. Colocalizes with NR0B2 in the nucleus (By similarity).</text>
</comment>
<comment type="tissue specificity">
    <text>Most abundant in pancreatic alpha- and beta-cells, less in brain and intestine.</text>
</comment>
<comment type="PTM">
    <text evidence="1">Phosphorylated. In islet cells, phosphorylated on Ser-273 upon glucose stimulation; which may be required for nuclear localization. In activated neurons, phosphorylated on Ser-334; which promotes dendritic growth. Phosphorylated by MAPK1; phosphorylation regulates heterodimerization and DNA-binding activities. Phosphorylation on Ser-265 and Ser-273 increases transactivation on the insulin promoter in glucose-stimulated insulinoma cells (By similarity).</text>
</comment>
<comment type="sequence caution" evidence="8">
    <conflict type="erroneous initiation">
        <sequence resource="EMBL-CDS" id="AAA86518"/>
    </conflict>
    <text>Extended N-terminus.</text>
</comment>
<feature type="chain" id="PRO_0000127382" description="Neurogenic differentiation factor 1">
    <location>
        <begin position="1"/>
        <end position="355"/>
    </location>
</feature>
<feature type="domain" description="bHLH" evidence="5">
    <location>
        <begin position="100"/>
        <end position="152"/>
    </location>
</feature>
<feature type="region of interest" description="Disordered" evidence="6">
    <location>
        <begin position="1"/>
        <end position="93"/>
    </location>
</feature>
<feature type="short sequence motif" description="Nuclear localization signal" evidence="4">
    <location>
        <begin position="86"/>
        <end position="92"/>
    </location>
</feature>
<feature type="compositionally biased region" description="Acidic residues" evidence="6">
    <location>
        <begin position="58"/>
        <end position="77"/>
    </location>
</feature>
<feature type="compositionally biased region" description="Basic residues" evidence="6">
    <location>
        <begin position="80"/>
        <end position="92"/>
    </location>
</feature>
<feature type="modified residue" description="Phosphoserine" evidence="2">
    <location>
        <position position="161"/>
    </location>
</feature>
<feature type="modified residue" description="Phosphoserine" evidence="2">
    <location>
        <position position="258"/>
    </location>
</feature>
<feature type="modified residue" description="Phosphoserine" evidence="2">
    <location>
        <position position="265"/>
    </location>
</feature>
<feature type="modified residue" description="Phosphoserine" evidence="2">
    <location>
        <position position="273"/>
    </location>
</feature>
<feature type="modified residue" description="Phosphoserine; by CaMK2" evidence="3">
    <location>
        <position position="334"/>
    </location>
</feature>
<accession>Q60430</accession>
<protein>
    <recommendedName>
        <fullName>Neurogenic differentiation factor 1</fullName>
        <shortName>NeuroD1</shortName>
    </recommendedName>
    <alternativeName>
        <fullName>Beta-cell E-box transcriptional activator 2</fullName>
        <shortName>Beta2</shortName>
    </alternativeName>
</protein>
<keyword id="KW-0010">Activator</keyword>
<keyword id="KW-0963">Cytoplasm</keyword>
<keyword id="KW-0217">Developmental protein</keyword>
<keyword id="KW-0221">Differentiation</keyword>
<keyword id="KW-0238">DNA-binding</keyword>
<keyword id="KW-0524">Neurogenesis</keyword>
<keyword id="KW-0539">Nucleus</keyword>
<keyword id="KW-0597">Phosphoprotein</keyword>
<keyword id="KW-1185">Reference proteome</keyword>
<keyword id="KW-0804">Transcription</keyword>
<keyword id="KW-0805">Transcription regulation</keyword>
<sequence>MTKSYSESGLMGEPQPQGPPSWTDECLSSQDEDHEADKKEDELEAMNAEEDSLRNGGDEEDEDEDLEEEDEEEEEDDQKPKRRGPKKKKMTKARLERFKLRRMKANARERNRMHGLNAALDNLRKVVPCYSKTQKLSKIETLRLAKNYIWALSEILRSGKSPDLVSFVQTLCKGLSQPTTNLVAGCLQLNPRTFLPEQNPDMPPHLPTASASFPVHPYSYQSPGLPSPPYGTMDSSHVFQVKPPPHAYSATLEPFFESPLTDCTSPSFDGPLSPPLSINGNFSFKHEPSAEFEKNYAFTMHYPAATLAGPQSHGSIFSGATAPRCEIPIDNIMSFDSHSHHERVMSAQLNAIFHD</sequence>
<organism>
    <name type="scientific">Mesocricetus auratus</name>
    <name type="common">Golden hamster</name>
    <dbReference type="NCBI Taxonomy" id="10036"/>
    <lineage>
        <taxon>Eukaryota</taxon>
        <taxon>Metazoa</taxon>
        <taxon>Chordata</taxon>
        <taxon>Craniata</taxon>
        <taxon>Vertebrata</taxon>
        <taxon>Euteleostomi</taxon>
        <taxon>Mammalia</taxon>
        <taxon>Eutheria</taxon>
        <taxon>Euarchontoglires</taxon>
        <taxon>Glires</taxon>
        <taxon>Rodentia</taxon>
        <taxon>Myomorpha</taxon>
        <taxon>Muroidea</taxon>
        <taxon>Cricetidae</taxon>
        <taxon>Cricetinae</taxon>
        <taxon>Mesocricetus</taxon>
    </lineage>
</organism>
<name>NDF1_MESAU</name>
<dbReference type="EMBL" id="U24679">
    <property type="protein sequence ID" value="AAA86518.1"/>
    <property type="status" value="ALT_INIT"/>
    <property type="molecule type" value="mRNA"/>
</dbReference>
<dbReference type="PIR" id="A57059">
    <property type="entry name" value="A57059"/>
</dbReference>
<dbReference type="RefSeq" id="XP_005065174.1">
    <property type="nucleotide sequence ID" value="XM_005065117.2"/>
</dbReference>
<dbReference type="SMR" id="Q60430"/>
<dbReference type="STRING" id="10036.ENSMAUP00000017074"/>
<dbReference type="Ensembl" id="ENSMAUT00000021020">
    <property type="protein sequence ID" value="ENSMAUP00000017074"/>
    <property type="gene ID" value="ENSMAUG00000016034"/>
</dbReference>
<dbReference type="GeneID" id="101829221"/>
<dbReference type="KEGG" id="maua:101829221"/>
<dbReference type="CTD" id="4760"/>
<dbReference type="eggNOG" id="KOG3898">
    <property type="taxonomic scope" value="Eukaryota"/>
</dbReference>
<dbReference type="OrthoDB" id="10039134at2759"/>
<dbReference type="Proteomes" id="UP000189706">
    <property type="component" value="Unplaced"/>
</dbReference>
<dbReference type="GO" id="GO:0005737">
    <property type="term" value="C:cytoplasm"/>
    <property type="evidence" value="ECO:0007669"/>
    <property type="project" value="UniProtKB-SubCell"/>
</dbReference>
<dbReference type="GO" id="GO:0090575">
    <property type="term" value="C:RNA polymerase II transcription regulator complex"/>
    <property type="evidence" value="ECO:0007669"/>
    <property type="project" value="Ensembl"/>
</dbReference>
<dbReference type="GO" id="GO:0003682">
    <property type="term" value="F:chromatin binding"/>
    <property type="evidence" value="ECO:0000250"/>
    <property type="project" value="UniProtKB"/>
</dbReference>
<dbReference type="GO" id="GO:0001228">
    <property type="term" value="F:DNA-binding transcription activator activity, RNA polymerase II-specific"/>
    <property type="evidence" value="ECO:0007669"/>
    <property type="project" value="Ensembl"/>
</dbReference>
<dbReference type="GO" id="GO:0070888">
    <property type="term" value="F:E-box binding"/>
    <property type="evidence" value="ECO:0000250"/>
    <property type="project" value="UniProtKB"/>
</dbReference>
<dbReference type="GO" id="GO:0046982">
    <property type="term" value="F:protein heterodimerization activity"/>
    <property type="evidence" value="ECO:0007669"/>
    <property type="project" value="Ensembl"/>
</dbReference>
<dbReference type="GO" id="GO:0061629">
    <property type="term" value="F:RNA polymerase II-specific DNA-binding transcription factor binding"/>
    <property type="evidence" value="ECO:0007669"/>
    <property type="project" value="Ensembl"/>
</dbReference>
<dbReference type="GO" id="GO:0035881">
    <property type="term" value="P:amacrine cell differentiation"/>
    <property type="evidence" value="ECO:0000250"/>
    <property type="project" value="UniProtKB"/>
</dbReference>
<dbReference type="GO" id="GO:0009952">
    <property type="term" value="P:anterior/posterior pattern specification"/>
    <property type="evidence" value="ECO:0007669"/>
    <property type="project" value="Ensembl"/>
</dbReference>
<dbReference type="GO" id="GO:0061564">
    <property type="term" value="P:axon development"/>
    <property type="evidence" value="ECO:0007669"/>
    <property type="project" value="TreeGrafter"/>
</dbReference>
<dbReference type="GO" id="GO:0007259">
    <property type="term" value="P:cell surface receptor signaling pathway via JAK-STAT"/>
    <property type="evidence" value="ECO:0007669"/>
    <property type="project" value="Ensembl"/>
</dbReference>
<dbReference type="GO" id="GO:0021549">
    <property type="term" value="P:cerebellum development"/>
    <property type="evidence" value="ECO:0000250"/>
    <property type="project" value="UniProtKB"/>
</dbReference>
<dbReference type="GO" id="GO:0021542">
    <property type="term" value="P:dentate gyrus development"/>
    <property type="evidence" value="ECO:0000250"/>
    <property type="project" value="UniProtKB"/>
</dbReference>
<dbReference type="GO" id="GO:0048562">
    <property type="term" value="P:embryonic organ morphogenesis"/>
    <property type="evidence" value="ECO:0007669"/>
    <property type="project" value="Ensembl"/>
</dbReference>
<dbReference type="GO" id="GO:0031018">
    <property type="term" value="P:endocrine pancreas development"/>
    <property type="evidence" value="ECO:0000250"/>
    <property type="project" value="UniProtKB"/>
</dbReference>
<dbReference type="GO" id="GO:0035883">
    <property type="term" value="P:enteroendocrine cell differentiation"/>
    <property type="evidence" value="ECO:0000250"/>
    <property type="project" value="UniProtKB"/>
</dbReference>
<dbReference type="GO" id="GO:0042593">
    <property type="term" value="P:glucose homeostasis"/>
    <property type="evidence" value="ECO:0007669"/>
    <property type="project" value="Ensembl"/>
</dbReference>
<dbReference type="GO" id="GO:0048839">
    <property type="term" value="P:inner ear development"/>
    <property type="evidence" value="ECO:0000250"/>
    <property type="project" value="UniProtKB"/>
</dbReference>
<dbReference type="GO" id="GO:0030073">
    <property type="term" value="P:insulin secretion"/>
    <property type="evidence" value="ECO:0007669"/>
    <property type="project" value="Ensembl"/>
</dbReference>
<dbReference type="GO" id="GO:0046426">
    <property type="term" value="P:negative regulation of receptor signaling pathway via JAK-STAT"/>
    <property type="evidence" value="ECO:0007669"/>
    <property type="project" value="Ensembl"/>
</dbReference>
<dbReference type="GO" id="GO:2000675">
    <property type="term" value="P:negative regulation of type B pancreatic cell apoptotic process"/>
    <property type="evidence" value="ECO:0007669"/>
    <property type="project" value="Ensembl"/>
</dbReference>
<dbReference type="GO" id="GO:0003326">
    <property type="term" value="P:pancreatic A cell fate commitment"/>
    <property type="evidence" value="ECO:0007669"/>
    <property type="project" value="Ensembl"/>
</dbReference>
<dbReference type="GO" id="GO:0003329">
    <property type="term" value="P:pancreatic PP cell fate commitment"/>
    <property type="evidence" value="ECO:0007669"/>
    <property type="project" value="Ensembl"/>
</dbReference>
<dbReference type="GO" id="GO:0043065">
    <property type="term" value="P:positive regulation of apoptotic process"/>
    <property type="evidence" value="ECO:0000250"/>
    <property type="project" value="UniProtKB"/>
</dbReference>
<dbReference type="GO" id="GO:0045597">
    <property type="term" value="P:positive regulation of cell differentiation"/>
    <property type="evidence" value="ECO:0000250"/>
    <property type="project" value="UniProtKB"/>
</dbReference>
<dbReference type="GO" id="GO:0051091">
    <property type="term" value="P:positive regulation of DNA-binding transcription factor activity"/>
    <property type="evidence" value="ECO:0000250"/>
    <property type="project" value="UniProtKB"/>
</dbReference>
<dbReference type="GO" id="GO:0045893">
    <property type="term" value="P:positive regulation of DNA-templated transcription"/>
    <property type="evidence" value="ECO:0000250"/>
    <property type="project" value="UniProtKB"/>
</dbReference>
<dbReference type="GO" id="GO:0045666">
    <property type="term" value="P:positive regulation of neuron differentiation"/>
    <property type="evidence" value="ECO:0000250"/>
    <property type="project" value="UniProtKB"/>
</dbReference>
<dbReference type="GO" id="GO:0045944">
    <property type="term" value="P:positive regulation of transcription by RNA polymerase II"/>
    <property type="evidence" value="ECO:0000250"/>
    <property type="project" value="UniProtKB"/>
</dbReference>
<dbReference type="GO" id="GO:0060730">
    <property type="term" value="P:regulation of intestinal epithelial structure maintenance"/>
    <property type="evidence" value="ECO:0000250"/>
    <property type="project" value="UniProtKB"/>
</dbReference>
<dbReference type="GO" id="GO:0009749">
    <property type="term" value="P:response to glucose"/>
    <property type="evidence" value="ECO:0007669"/>
    <property type="project" value="Ensembl"/>
</dbReference>
<dbReference type="GO" id="GO:0023019">
    <property type="term" value="P:signal transduction involved in regulation of gene expression"/>
    <property type="evidence" value="ECO:0007669"/>
    <property type="project" value="Ensembl"/>
</dbReference>
<dbReference type="GO" id="GO:0006366">
    <property type="term" value="P:transcription by RNA polymerase II"/>
    <property type="evidence" value="ECO:0007669"/>
    <property type="project" value="Ensembl"/>
</dbReference>
<dbReference type="CDD" id="cd19719">
    <property type="entry name" value="bHLH_TS_NeuroD1"/>
    <property type="match status" value="1"/>
</dbReference>
<dbReference type="FunFam" id="4.10.280.10:FF:000006">
    <property type="entry name" value="Neurogenic differentiation factor"/>
    <property type="match status" value="1"/>
</dbReference>
<dbReference type="Gene3D" id="4.10.280.10">
    <property type="entry name" value="Helix-loop-helix DNA-binding domain"/>
    <property type="match status" value="1"/>
</dbReference>
<dbReference type="InterPro" id="IPR011598">
    <property type="entry name" value="bHLH_dom"/>
</dbReference>
<dbReference type="InterPro" id="IPR050359">
    <property type="entry name" value="bHLH_transcription_factors"/>
</dbReference>
<dbReference type="InterPro" id="IPR036638">
    <property type="entry name" value="HLH_DNA-bd_sf"/>
</dbReference>
<dbReference type="InterPro" id="IPR022575">
    <property type="entry name" value="NeuroD_DUF"/>
</dbReference>
<dbReference type="InterPro" id="IPR016637">
    <property type="entry name" value="TF_bHLH_NeuroD"/>
</dbReference>
<dbReference type="PANTHER" id="PTHR19290">
    <property type="entry name" value="BASIC HELIX-LOOP-HELIX PROTEIN NEUROGENIN-RELATED"/>
    <property type="match status" value="1"/>
</dbReference>
<dbReference type="PANTHER" id="PTHR19290:SF88">
    <property type="entry name" value="NEUROGENIC DIFFERENTIATION FACTOR 1"/>
    <property type="match status" value="1"/>
</dbReference>
<dbReference type="Pfam" id="PF00010">
    <property type="entry name" value="HLH"/>
    <property type="match status" value="1"/>
</dbReference>
<dbReference type="Pfam" id="PF12533">
    <property type="entry name" value="Neuro_bHLH"/>
    <property type="match status" value="1"/>
</dbReference>
<dbReference type="PIRSF" id="PIRSF015618">
    <property type="entry name" value="bHLH_NeuroD"/>
    <property type="match status" value="1"/>
</dbReference>
<dbReference type="SMART" id="SM00353">
    <property type="entry name" value="HLH"/>
    <property type="match status" value="1"/>
</dbReference>
<dbReference type="SUPFAM" id="SSF47459">
    <property type="entry name" value="HLH, helix-loop-helix DNA-binding domain"/>
    <property type="match status" value="1"/>
</dbReference>
<dbReference type="PROSITE" id="PS50888">
    <property type="entry name" value="BHLH"/>
    <property type="match status" value="1"/>
</dbReference>
<evidence type="ECO:0000250" key="1"/>
<evidence type="ECO:0000250" key="2">
    <source>
        <dbReference type="UniProtKB" id="Q60867"/>
    </source>
</evidence>
<evidence type="ECO:0000250" key="3">
    <source>
        <dbReference type="UniProtKB" id="Q64289"/>
    </source>
</evidence>
<evidence type="ECO:0000255" key="4"/>
<evidence type="ECO:0000255" key="5">
    <source>
        <dbReference type="PROSITE-ProRule" id="PRU00981"/>
    </source>
</evidence>
<evidence type="ECO:0000256" key="6">
    <source>
        <dbReference type="SAM" id="MobiDB-lite"/>
    </source>
</evidence>
<evidence type="ECO:0000269" key="7">
    <source>
    </source>
</evidence>
<evidence type="ECO:0000305" key="8"/>
<gene>
    <name type="primary">NEUROD1</name>
    <name type="synonym">NEUROD</name>
</gene>
<reference key="1">
    <citation type="journal article" date="1995" name="Genes Dev.">
        <title>Tissue-specific regulation of the insulin gene by a novel basic helix-loop-helix transcription factor.</title>
        <authorList>
            <person name="Naya F.J."/>
            <person name="Stellrecht C.M.M."/>
            <person name="Tsai M.-J."/>
        </authorList>
    </citation>
    <scope>NUCLEOTIDE SEQUENCE [MRNA]</scope>
</reference>
<reference key="2">
    <citation type="journal article" date="2003" name="Mol. Cell. Biol.">
        <title>Novel transcriptional potentiation of BETA2/NeuroD on the secretin gene promoter by the DNA-binding protein Finb/RREB-1.</title>
        <authorList>
            <person name="Ray S.K."/>
            <person name="Nishitani J."/>
            <person name="Petry M.W."/>
            <person name="Fessing M.Y."/>
            <person name="Leiter A.B."/>
        </authorList>
    </citation>
    <scope>INTERACTION WITH RREB1</scope>
</reference>